<feature type="chain" id="PRO_1000051326" description="Small ribosomal subunit protein uS9">
    <location>
        <begin position="1"/>
        <end position="130"/>
    </location>
</feature>
<sequence length="130" mass="14536">MAATQYYGTGRRKTSTARVFAKAGSGNIVVNQRPLDQYFGRETARMVVRQPLELVEMTDKLDIYVTVKGGGITGQAGAIRHGITRALMQLDEALRPSLRSAGFVTRDARKVERKKVGLRKARRKPQFSKR</sequence>
<name>RS9_SHESR</name>
<protein>
    <recommendedName>
        <fullName evidence="1">Small ribosomal subunit protein uS9</fullName>
    </recommendedName>
    <alternativeName>
        <fullName evidence="2">30S ribosomal protein S9</fullName>
    </alternativeName>
</protein>
<gene>
    <name evidence="1" type="primary">rpsI</name>
    <name type="ordered locus">Shewmr7_0679</name>
</gene>
<accession>Q0HYX4</accession>
<evidence type="ECO:0000255" key="1">
    <source>
        <dbReference type="HAMAP-Rule" id="MF_00532"/>
    </source>
</evidence>
<evidence type="ECO:0000305" key="2"/>
<comment type="similarity">
    <text evidence="1">Belongs to the universal ribosomal protein uS9 family.</text>
</comment>
<dbReference type="EMBL" id="CP000444">
    <property type="protein sequence ID" value="ABI41681.1"/>
    <property type="molecule type" value="Genomic_DNA"/>
</dbReference>
<dbReference type="SMR" id="Q0HYX4"/>
<dbReference type="KEGG" id="shm:Shewmr7_0679"/>
<dbReference type="HOGENOM" id="CLU_046483_2_1_6"/>
<dbReference type="GO" id="GO:0022627">
    <property type="term" value="C:cytosolic small ribosomal subunit"/>
    <property type="evidence" value="ECO:0007669"/>
    <property type="project" value="TreeGrafter"/>
</dbReference>
<dbReference type="GO" id="GO:0003723">
    <property type="term" value="F:RNA binding"/>
    <property type="evidence" value="ECO:0007669"/>
    <property type="project" value="TreeGrafter"/>
</dbReference>
<dbReference type="GO" id="GO:0003735">
    <property type="term" value="F:structural constituent of ribosome"/>
    <property type="evidence" value="ECO:0007669"/>
    <property type="project" value="InterPro"/>
</dbReference>
<dbReference type="GO" id="GO:0006412">
    <property type="term" value="P:translation"/>
    <property type="evidence" value="ECO:0007669"/>
    <property type="project" value="UniProtKB-UniRule"/>
</dbReference>
<dbReference type="FunFam" id="3.30.230.10:FF:000001">
    <property type="entry name" value="30S ribosomal protein S9"/>
    <property type="match status" value="1"/>
</dbReference>
<dbReference type="Gene3D" id="3.30.230.10">
    <property type="match status" value="1"/>
</dbReference>
<dbReference type="HAMAP" id="MF_00532_B">
    <property type="entry name" value="Ribosomal_uS9_B"/>
    <property type="match status" value="1"/>
</dbReference>
<dbReference type="InterPro" id="IPR020568">
    <property type="entry name" value="Ribosomal_Su5_D2-typ_SF"/>
</dbReference>
<dbReference type="InterPro" id="IPR000754">
    <property type="entry name" value="Ribosomal_uS9"/>
</dbReference>
<dbReference type="InterPro" id="IPR023035">
    <property type="entry name" value="Ribosomal_uS9_bac/plastid"/>
</dbReference>
<dbReference type="InterPro" id="IPR020574">
    <property type="entry name" value="Ribosomal_uS9_CS"/>
</dbReference>
<dbReference type="InterPro" id="IPR014721">
    <property type="entry name" value="Ribsml_uS5_D2-typ_fold_subgr"/>
</dbReference>
<dbReference type="NCBIfam" id="NF001099">
    <property type="entry name" value="PRK00132.1"/>
    <property type="match status" value="1"/>
</dbReference>
<dbReference type="PANTHER" id="PTHR21569">
    <property type="entry name" value="RIBOSOMAL PROTEIN S9"/>
    <property type="match status" value="1"/>
</dbReference>
<dbReference type="PANTHER" id="PTHR21569:SF1">
    <property type="entry name" value="SMALL RIBOSOMAL SUBUNIT PROTEIN US9M"/>
    <property type="match status" value="1"/>
</dbReference>
<dbReference type="Pfam" id="PF00380">
    <property type="entry name" value="Ribosomal_S9"/>
    <property type="match status" value="1"/>
</dbReference>
<dbReference type="SUPFAM" id="SSF54211">
    <property type="entry name" value="Ribosomal protein S5 domain 2-like"/>
    <property type="match status" value="1"/>
</dbReference>
<dbReference type="PROSITE" id="PS00360">
    <property type="entry name" value="RIBOSOMAL_S9"/>
    <property type="match status" value="1"/>
</dbReference>
<proteinExistence type="inferred from homology"/>
<organism>
    <name type="scientific">Shewanella sp. (strain MR-7)</name>
    <dbReference type="NCBI Taxonomy" id="60481"/>
    <lineage>
        <taxon>Bacteria</taxon>
        <taxon>Pseudomonadati</taxon>
        <taxon>Pseudomonadota</taxon>
        <taxon>Gammaproteobacteria</taxon>
        <taxon>Alteromonadales</taxon>
        <taxon>Shewanellaceae</taxon>
        <taxon>Shewanella</taxon>
    </lineage>
</organism>
<keyword id="KW-0687">Ribonucleoprotein</keyword>
<keyword id="KW-0689">Ribosomal protein</keyword>
<reference key="1">
    <citation type="submission" date="2006-08" db="EMBL/GenBank/DDBJ databases">
        <title>Complete sequence of chromosome 1 of Shewanella sp. MR-7.</title>
        <authorList>
            <person name="Copeland A."/>
            <person name="Lucas S."/>
            <person name="Lapidus A."/>
            <person name="Barry K."/>
            <person name="Detter J.C."/>
            <person name="Glavina del Rio T."/>
            <person name="Hammon N."/>
            <person name="Israni S."/>
            <person name="Dalin E."/>
            <person name="Tice H."/>
            <person name="Pitluck S."/>
            <person name="Kiss H."/>
            <person name="Brettin T."/>
            <person name="Bruce D."/>
            <person name="Han C."/>
            <person name="Tapia R."/>
            <person name="Gilna P."/>
            <person name="Schmutz J."/>
            <person name="Larimer F."/>
            <person name="Land M."/>
            <person name="Hauser L."/>
            <person name="Kyrpides N."/>
            <person name="Mikhailova N."/>
            <person name="Nealson K."/>
            <person name="Konstantinidis K."/>
            <person name="Klappenbach J."/>
            <person name="Tiedje J."/>
            <person name="Richardson P."/>
        </authorList>
    </citation>
    <scope>NUCLEOTIDE SEQUENCE [LARGE SCALE GENOMIC DNA]</scope>
    <source>
        <strain>MR-7</strain>
    </source>
</reference>